<organism>
    <name type="scientific">Listeria monocytogenes serotype 4b (strain CLIP80459)</name>
    <dbReference type="NCBI Taxonomy" id="568819"/>
    <lineage>
        <taxon>Bacteria</taxon>
        <taxon>Bacillati</taxon>
        <taxon>Bacillota</taxon>
        <taxon>Bacilli</taxon>
        <taxon>Bacillales</taxon>
        <taxon>Listeriaceae</taxon>
        <taxon>Listeria</taxon>
    </lineage>
</organism>
<feature type="chain" id="PRO_1000214915" description="Small ribosomal subunit protein uS14">
    <location>
        <begin position="1"/>
        <end position="61"/>
    </location>
</feature>
<feature type="binding site" evidence="1">
    <location>
        <position position="24"/>
    </location>
    <ligand>
        <name>Zn(2+)</name>
        <dbReference type="ChEBI" id="CHEBI:29105"/>
    </ligand>
</feature>
<feature type="binding site" evidence="1">
    <location>
        <position position="27"/>
    </location>
    <ligand>
        <name>Zn(2+)</name>
        <dbReference type="ChEBI" id="CHEBI:29105"/>
    </ligand>
</feature>
<feature type="binding site" evidence="1">
    <location>
        <position position="40"/>
    </location>
    <ligand>
        <name>Zn(2+)</name>
        <dbReference type="ChEBI" id="CHEBI:29105"/>
    </ligand>
</feature>
<feature type="binding site" evidence="1">
    <location>
        <position position="43"/>
    </location>
    <ligand>
        <name>Zn(2+)</name>
        <dbReference type="ChEBI" id="CHEBI:29105"/>
    </ligand>
</feature>
<keyword id="KW-0479">Metal-binding</keyword>
<keyword id="KW-0687">Ribonucleoprotein</keyword>
<keyword id="KW-0689">Ribosomal protein</keyword>
<keyword id="KW-0694">RNA-binding</keyword>
<keyword id="KW-0699">rRNA-binding</keyword>
<keyword id="KW-0862">Zinc</keyword>
<name>RS14Z_LISMC</name>
<protein>
    <recommendedName>
        <fullName evidence="1">Small ribosomal subunit protein uS14</fullName>
    </recommendedName>
    <alternativeName>
        <fullName evidence="2">30S ribosomal protein S14 type Z</fullName>
    </alternativeName>
</protein>
<reference key="1">
    <citation type="journal article" date="2012" name="BMC Genomics">
        <title>Comparative genomics and transcriptomics of lineages I, II, and III strains of Listeria monocytogenes.</title>
        <authorList>
            <person name="Hain T."/>
            <person name="Ghai R."/>
            <person name="Billion A."/>
            <person name="Kuenne C.T."/>
            <person name="Steinweg C."/>
            <person name="Izar B."/>
            <person name="Mohamed W."/>
            <person name="Mraheil M."/>
            <person name="Domann E."/>
            <person name="Schaffrath S."/>
            <person name="Karst U."/>
            <person name="Goesmann A."/>
            <person name="Oehm S."/>
            <person name="Puhler A."/>
            <person name="Merkl R."/>
            <person name="Vorwerk S."/>
            <person name="Glaser P."/>
            <person name="Garrido P."/>
            <person name="Rusniok C."/>
            <person name="Buchrieser C."/>
            <person name="Goebel W."/>
            <person name="Chakraborty T."/>
        </authorList>
    </citation>
    <scope>NUCLEOTIDE SEQUENCE [LARGE SCALE GENOMIC DNA]</scope>
    <source>
        <strain>CLIP80459</strain>
    </source>
</reference>
<evidence type="ECO:0000255" key="1">
    <source>
        <dbReference type="HAMAP-Rule" id="MF_01364"/>
    </source>
</evidence>
<evidence type="ECO:0000305" key="2"/>
<gene>
    <name evidence="1" type="primary">rpsZ</name>
    <name evidence="1" type="synonym">rpsN</name>
    <name type="ordered locus">Lm4b_02586</name>
</gene>
<comment type="function">
    <text evidence="1">Binds 16S rRNA, required for the assembly of 30S particles and may also be responsible for determining the conformation of the 16S rRNA at the A site.</text>
</comment>
<comment type="cofactor">
    <cofactor evidence="1">
        <name>Zn(2+)</name>
        <dbReference type="ChEBI" id="CHEBI:29105"/>
    </cofactor>
    <text evidence="1">Binds 1 zinc ion per subunit.</text>
</comment>
<comment type="subunit">
    <text evidence="1">Part of the 30S ribosomal subunit. Contacts proteins S3 and S10.</text>
</comment>
<comment type="similarity">
    <text evidence="1">Belongs to the universal ribosomal protein uS14 family. Zinc-binding uS14 subfamily.</text>
</comment>
<proteinExistence type="inferred from homology"/>
<sequence length="61" mass="7147">MAKKSMIAKQKRTPKYAVQAYTRCERCGRPHSVIRKFKLCRICFRELAYKGQIPGVKKASW</sequence>
<accession>C1KZG7</accession>
<dbReference type="EMBL" id="FM242711">
    <property type="protein sequence ID" value="CAS06340.1"/>
    <property type="molecule type" value="Genomic_DNA"/>
</dbReference>
<dbReference type="RefSeq" id="WP_003723684.1">
    <property type="nucleotide sequence ID" value="NC_012488.1"/>
</dbReference>
<dbReference type="SMR" id="C1KZG7"/>
<dbReference type="KEGG" id="lmc:Lm4b_02586"/>
<dbReference type="HOGENOM" id="CLU_139869_3_0_9"/>
<dbReference type="GO" id="GO:0015935">
    <property type="term" value="C:small ribosomal subunit"/>
    <property type="evidence" value="ECO:0007669"/>
    <property type="project" value="TreeGrafter"/>
</dbReference>
<dbReference type="GO" id="GO:0019843">
    <property type="term" value="F:rRNA binding"/>
    <property type="evidence" value="ECO:0007669"/>
    <property type="project" value="UniProtKB-UniRule"/>
</dbReference>
<dbReference type="GO" id="GO:0003735">
    <property type="term" value="F:structural constituent of ribosome"/>
    <property type="evidence" value="ECO:0007669"/>
    <property type="project" value="InterPro"/>
</dbReference>
<dbReference type="GO" id="GO:0008270">
    <property type="term" value="F:zinc ion binding"/>
    <property type="evidence" value="ECO:0007669"/>
    <property type="project" value="UniProtKB-UniRule"/>
</dbReference>
<dbReference type="GO" id="GO:0006412">
    <property type="term" value="P:translation"/>
    <property type="evidence" value="ECO:0007669"/>
    <property type="project" value="UniProtKB-UniRule"/>
</dbReference>
<dbReference type="FunFam" id="4.10.830.10:FF:000001">
    <property type="entry name" value="30S ribosomal protein S14 type Z"/>
    <property type="match status" value="1"/>
</dbReference>
<dbReference type="Gene3D" id="4.10.830.10">
    <property type="entry name" value="30s Ribosomal Protein S14, Chain N"/>
    <property type="match status" value="1"/>
</dbReference>
<dbReference type="HAMAP" id="MF_01364_B">
    <property type="entry name" value="Ribosomal_uS14_2_B"/>
    <property type="match status" value="1"/>
</dbReference>
<dbReference type="InterPro" id="IPR001209">
    <property type="entry name" value="Ribosomal_uS14"/>
</dbReference>
<dbReference type="InterPro" id="IPR023053">
    <property type="entry name" value="Ribosomal_uS14_bact"/>
</dbReference>
<dbReference type="InterPro" id="IPR018271">
    <property type="entry name" value="Ribosomal_uS14_CS"/>
</dbReference>
<dbReference type="InterPro" id="IPR043140">
    <property type="entry name" value="Ribosomal_uS14_sf"/>
</dbReference>
<dbReference type="NCBIfam" id="NF005974">
    <property type="entry name" value="PRK08061.1"/>
    <property type="match status" value="1"/>
</dbReference>
<dbReference type="PANTHER" id="PTHR19836">
    <property type="entry name" value="30S RIBOSOMAL PROTEIN S14"/>
    <property type="match status" value="1"/>
</dbReference>
<dbReference type="PANTHER" id="PTHR19836:SF26">
    <property type="entry name" value="SMALL RIBOSOMAL SUBUNIT PROTEIN US14B"/>
    <property type="match status" value="1"/>
</dbReference>
<dbReference type="Pfam" id="PF00253">
    <property type="entry name" value="Ribosomal_S14"/>
    <property type="match status" value="1"/>
</dbReference>
<dbReference type="SUPFAM" id="SSF57716">
    <property type="entry name" value="Glucocorticoid receptor-like (DNA-binding domain)"/>
    <property type="match status" value="1"/>
</dbReference>
<dbReference type="PROSITE" id="PS00527">
    <property type="entry name" value="RIBOSOMAL_S14"/>
    <property type="match status" value="1"/>
</dbReference>